<evidence type="ECO:0000255" key="1">
    <source>
        <dbReference type="HAMAP-Rule" id="MF_01429"/>
    </source>
</evidence>
<name>ISCA_SALTY</name>
<sequence length="107" mass="11504">MSITLSDSAAARVNTFLANRGKGFGLRLGVRTSGCSGMAYVLEFVDEPTAEDTVFEDKGVKVVVDGKSLQFLDGTQLDFVKEGLNEGFKFSNPNVKDECGCGESFHV</sequence>
<proteinExistence type="inferred from homology"/>
<comment type="function">
    <text evidence="1">Is able to transfer iron-sulfur clusters to apo-ferredoxin. Multiple cycles of [2Fe2S] cluster formation and transfer are observed, suggesting that IscA acts catalytically. Recruits intracellular free iron so as to provide iron for the assembly of transient iron-sulfur cluster in IscU in the presence of IscS, L-cysteine and the thioredoxin reductase system TrxA/TrxB.</text>
</comment>
<comment type="cofactor">
    <cofactor evidence="1">
        <name>Fe cation</name>
        <dbReference type="ChEBI" id="CHEBI:24875"/>
    </cofactor>
    <text evidence="1">Binds 2 iron ions per dimer. The dimer may bind additional iron ions.</text>
</comment>
<comment type="subunit">
    <text evidence="1">Homodimer; may form tetramers and higher multimers.</text>
</comment>
<comment type="similarity">
    <text evidence="1">Belongs to the HesB/IscA family.</text>
</comment>
<accession>Q7CQ12</accession>
<reference key="1">
    <citation type="journal article" date="2001" name="Nature">
        <title>Complete genome sequence of Salmonella enterica serovar Typhimurium LT2.</title>
        <authorList>
            <person name="McClelland M."/>
            <person name="Sanderson K.E."/>
            <person name="Spieth J."/>
            <person name="Clifton S.W."/>
            <person name="Latreille P."/>
            <person name="Courtney L."/>
            <person name="Porwollik S."/>
            <person name="Ali J."/>
            <person name="Dante M."/>
            <person name="Du F."/>
            <person name="Hou S."/>
            <person name="Layman D."/>
            <person name="Leonard S."/>
            <person name="Nguyen C."/>
            <person name="Scott K."/>
            <person name="Holmes A."/>
            <person name="Grewal N."/>
            <person name="Mulvaney E."/>
            <person name="Ryan E."/>
            <person name="Sun H."/>
            <person name="Florea L."/>
            <person name="Miller W."/>
            <person name="Stoneking T."/>
            <person name="Nhan M."/>
            <person name="Waterston R."/>
            <person name="Wilson R.K."/>
        </authorList>
    </citation>
    <scope>NUCLEOTIDE SEQUENCE [LARGE SCALE GENOMIC DNA]</scope>
    <source>
        <strain>LT2 / SGSC1412 / ATCC 700720</strain>
    </source>
</reference>
<protein>
    <recommendedName>
        <fullName evidence="1">Iron-binding protein IscA</fullName>
    </recommendedName>
    <alternativeName>
        <fullName evidence="1">Iron-sulfur cluster assembly protein</fullName>
    </alternativeName>
</protein>
<keyword id="KW-0408">Iron</keyword>
<keyword id="KW-0479">Metal-binding</keyword>
<keyword id="KW-1185">Reference proteome</keyword>
<organism>
    <name type="scientific">Salmonella typhimurium (strain LT2 / SGSC1412 / ATCC 700720)</name>
    <dbReference type="NCBI Taxonomy" id="99287"/>
    <lineage>
        <taxon>Bacteria</taxon>
        <taxon>Pseudomonadati</taxon>
        <taxon>Pseudomonadota</taxon>
        <taxon>Gammaproteobacteria</taxon>
        <taxon>Enterobacterales</taxon>
        <taxon>Enterobacteriaceae</taxon>
        <taxon>Salmonella</taxon>
    </lineage>
</organism>
<feature type="chain" id="PRO_0000077004" description="Iron-binding protein IscA">
    <location>
        <begin position="1"/>
        <end position="107"/>
    </location>
</feature>
<feature type="binding site" evidence="1">
    <location>
        <position position="35"/>
    </location>
    <ligand>
        <name>Fe cation</name>
        <dbReference type="ChEBI" id="CHEBI:24875"/>
    </ligand>
</feature>
<feature type="binding site" evidence="1">
    <location>
        <position position="99"/>
    </location>
    <ligand>
        <name>Fe cation</name>
        <dbReference type="ChEBI" id="CHEBI:24875"/>
    </ligand>
</feature>
<feature type="binding site" evidence="1">
    <location>
        <position position="101"/>
    </location>
    <ligand>
        <name>Fe cation</name>
        <dbReference type="ChEBI" id="CHEBI:24875"/>
    </ligand>
</feature>
<dbReference type="EMBL" id="AE006468">
    <property type="protein sequence ID" value="AAL21435.1"/>
    <property type="molecule type" value="Genomic_DNA"/>
</dbReference>
<dbReference type="RefSeq" id="WP_000028952.1">
    <property type="nucleotide sequence ID" value="NC_003197.2"/>
</dbReference>
<dbReference type="SMR" id="Q7CQ12"/>
<dbReference type="STRING" id="99287.STM2541"/>
<dbReference type="PaxDb" id="99287-STM2541"/>
<dbReference type="GeneID" id="66756972"/>
<dbReference type="KEGG" id="stm:STM2541"/>
<dbReference type="PATRIC" id="fig|99287.12.peg.2681"/>
<dbReference type="HOGENOM" id="CLU_069054_5_1_6"/>
<dbReference type="OMA" id="GCAGQEY"/>
<dbReference type="PhylomeDB" id="Q7CQ12"/>
<dbReference type="BioCyc" id="SENT99287:STM2541-MONOMER"/>
<dbReference type="Proteomes" id="UP000001014">
    <property type="component" value="Chromosome"/>
</dbReference>
<dbReference type="GO" id="GO:0005737">
    <property type="term" value="C:cytoplasm"/>
    <property type="evidence" value="ECO:0000318"/>
    <property type="project" value="GO_Central"/>
</dbReference>
<dbReference type="GO" id="GO:0005829">
    <property type="term" value="C:cytosol"/>
    <property type="evidence" value="ECO:0000318"/>
    <property type="project" value="GO_Central"/>
</dbReference>
<dbReference type="GO" id="GO:0051537">
    <property type="term" value="F:2 iron, 2 sulfur cluster binding"/>
    <property type="evidence" value="ECO:0000318"/>
    <property type="project" value="GO_Central"/>
</dbReference>
<dbReference type="GO" id="GO:0005506">
    <property type="term" value="F:iron ion binding"/>
    <property type="evidence" value="ECO:0007669"/>
    <property type="project" value="UniProtKB-UniRule"/>
</dbReference>
<dbReference type="GO" id="GO:0016226">
    <property type="term" value="P:iron-sulfur cluster assembly"/>
    <property type="evidence" value="ECO:0000318"/>
    <property type="project" value="GO_Central"/>
</dbReference>
<dbReference type="FunFam" id="2.60.300.12:FF:000001">
    <property type="entry name" value="Iron-binding protein IscA"/>
    <property type="match status" value="1"/>
</dbReference>
<dbReference type="Gene3D" id="2.60.300.12">
    <property type="entry name" value="HesB-like domain"/>
    <property type="match status" value="1"/>
</dbReference>
<dbReference type="HAMAP" id="MF_01429">
    <property type="entry name" value="Fe_S_insert_IscA"/>
    <property type="match status" value="1"/>
</dbReference>
<dbReference type="InterPro" id="IPR050322">
    <property type="entry name" value="Fe-S_cluster_asmbl/transfer"/>
</dbReference>
<dbReference type="InterPro" id="IPR000361">
    <property type="entry name" value="FeS_biogenesis"/>
</dbReference>
<dbReference type="InterPro" id="IPR016092">
    <property type="entry name" value="FeS_cluster_insertion"/>
</dbReference>
<dbReference type="InterPro" id="IPR017870">
    <property type="entry name" value="FeS_cluster_insertion_CS"/>
</dbReference>
<dbReference type="InterPro" id="IPR035903">
    <property type="entry name" value="HesB-like_dom_sf"/>
</dbReference>
<dbReference type="InterPro" id="IPR011302">
    <property type="entry name" value="IscA_proteobacteria"/>
</dbReference>
<dbReference type="NCBIfam" id="TIGR00049">
    <property type="entry name" value="iron-sulfur cluster assembly accessory protein"/>
    <property type="match status" value="1"/>
</dbReference>
<dbReference type="NCBIfam" id="TIGR02011">
    <property type="entry name" value="IscA"/>
    <property type="match status" value="1"/>
</dbReference>
<dbReference type="NCBIfam" id="NF007049">
    <property type="entry name" value="PRK09502.1"/>
    <property type="match status" value="1"/>
</dbReference>
<dbReference type="PANTHER" id="PTHR10072:SF41">
    <property type="entry name" value="IRON-SULFUR CLUSTER ASSEMBLY 1 HOMOLOG, MITOCHONDRIAL"/>
    <property type="match status" value="1"/>
</dbReference>
<dbReference type="PANTHER" id="PTHR10072">
    <property type="entry name" value="IRON-SULFUR CLUSTER ASSEMBLY PROTEIN"/>
    <property type="match status" value="1"/>
</dbReference>
<dbReference type="Pfam" id="PF01521">
    <property type="entry name" value="Fe-S_biosyn"/>
    <property type="match status" value="1"/>
</dbReference>
<dbReference type="SUPFAM" id="SSF89360">
    <property type="entry name" value="HesB-like domain"/>
    <property type="match status" value="1"/>
</dbReference>
<dbReference type="PROSITE" id="PS01152">
    <property type="entry name" value="HESB"/>
    <property type="match status" value="1"/>
</dbReference>
<gene>
    <name evidence="1" type="primary">iscA</name>
    <name type="ordered locus">STM2541</name>
</gene>